<sequence>MPAKKTMAQRLGQALETMTRQCGQLPETPAYGSWLLGRVSESPSRRWVRIKRIVTVYIMTANLTGIVVALLVVTFAFPVPSIYTDAPWWVTFGVAPAYATLALAIGTYWITTRIVRASIRWAIEERAPSQADGRNTLLLPFRVAAVHLILWDIGGALLATLYGLANRVFVTIILFSVTICGVLVATNCYLFTEFALRPVAAKALEAGRPPRRFAPGIMGRTMTVWSLGSGVPVTGIATTALYVLLVHNLTETQLASAVLILSITTLIFGFLVMWILAWLTAAPVRVVRAALKRVEQGDLRGDLVVFDGTELGELQRGFNAMVNGLRERERVRDLFGRHVGREVAAAAERERPQLGGEDRHAAVVFVDIVGSTQLVDNQPAAHVVKLLNRFFAIVVNEVDRHHGLINKFAGDAALAIFGAPNRLDRPEDAALAAARAIADRLANEMPEVQAGIGVAAGQIVAGNVGAKQRFEYTVVGKPVNQAARLCELAKSHPARLLASSDTLHAASETERAHWSLGETVTLRGYHQPTQLASPHRRPPGSIHLTAEHAEEIRTDRLG</sequence>
<keyword id="KW-1003">Cell membrane</keyword>
<keyword id="KW-0472">Membrane</keyword>
<keyword id="KW-1185">Reference proteome</keyword>
<keyword id="KW-0812">Transmembrane</keyword>
<keyword id="KW-1133">Transmembrane helix</keyword>
<protein>
    <recommendedName>
        <fullName>Uncharacterized protein MT1361</fullName>
    </recommendedName>
</protein>
<gene>
    <name type="ordered locus">MT1361</name>
</gene>
<accession>P9WQ30</accession>
<accession>L0T6A5</accession>
<accession>P0A4Y2</accession>
<accession>Q10632</accession>
<comment type="subcellular location">
    <subcellularLocation>
        <location evidence="5">Cell membrane</location>
        <topology evidence="5">Multi-pass membrane protein</topology>
    </subcellularLocation>
</comment>
<comment type="similarity">
    <text evidence="5">Belongs to the adenylyl cyclase class-3 family.</text>
</comment>
<name>Y1319_MYCTO</name>
<evidence type="ECO:0000255" key="1"/>
<evidence type="ECO:0000255" key="2">
    <source>
        <dbReference type="PROSITE-ProRule" id="PRU00099"/>
    </source>
</evidence>
<evidence type="ECO:0000255" key="3">
    <source>
        <dbReference type="PROSITE-ProRule" id="PRU00102"/>
    </source>
</evidence>
<evidence type="ECO:0000256" key="4">
    <source>
        <dbReference type="SAM" id="MobiDB-lite"/>
    </source>
</evidence>
<evidence type="ECO:0000305" key="5"/>
<organism>
    <name type="scientific">Mycobacterium tuberculosis (strain CDC 1551 / Oshkosh)</name>
    <dbReference type="NCBI Taxonomy" id="83331"/>
    <lineage>
        <taxon>Bacteria</taxon>
        <taxon>Bacillati</taxon>
        <taxon>Actinomycetota</taxon>
        <taxon>Actinomycetes</taxon>
        <taxon>Mycobacteriales</taxon>
        <taxon>Mycobacteriaceae</taxon>
        <taxon>Mycobacterium</taxon>
        <taxon>Mycobacterium tuberculosis complex</taxon>
    </lineage>
</organism>
<dbReference type="EMBL" id="AE000516">
    <property type="protein sequence ID" value="AAK45623.1"/>
    <property type="molecule type" value="Genomic_DNA"/>
</dbReference>
<dbReference type="PIR" id="C70769">
    <property type="entry name" value="C70769"/>
</dbReference>
<dbReference type="RefSeq" id="WP_003910324.1">
    <property type="nucleotide sequence ID" value="NC_002755.2"/>
</dbReference>
<dbReference type="SMR" id="P9WQ30"/>
<dbReference type="KEGG" id="mtc:MT1361"/>
<dbReference type="HOGENOM" id="CLU_025433_2_1_11"/>
<dbReference type="Proteomes" id="UP000001020">
    <property type="component" value="Chromosome"/>
</dbReference>
<dbReference type="GO" id="GO:0005886">
    <property type="term" value="C:plasma membrane"/>
    <property type="evidence" value="ECO:0007669"/>
    <property type="project" value="UniProtKB-SubCell"/>
</dbReference>
<dbReference type="GO" id="GO:0004016">
    <property type="term" value="F:adenylate cyclase activity"/>
    <property type="evidence" value="ECO:0007669"/>
    <property type="project" value="UniProtKB-ARBA"/>
</dbReference>
<dbReference type="GO" id="GO:0006171">
    <property type="term" value="P:cAMP biosynthetic process"/>
    <property type="evidence" value="ECO:0007669"/>
    <property type="project" value="TreeGrafter"/>
</dbReference>
<dbReference type="GO" id="GO:0035556">
    <property type="term" value="P:intracellular signal transduction"/>
    <property type="evidence" value="ECO:0007669"/>
    <property type="project" value="InterPro"/>
</dbReference>
<dbReference type="CDD" id="cd07302">
    <property type="entry name" value="CHD"/>
    <property type="match status" value="1"/>
</dbReference>
<dbReference type="CDD" id="cd06225">
    <property type="entry name" value="HAMP"/>
    <property type="match status" value="1"/>
</dbReference>
<dbReference type="FunFam" id="3.30.70.1230:FF:000016">
    <property type="entry name" value="Adenylate/guanylate cyclase domain-containing protein"/>
    <property type="match status" value="1"/>
</dbReference>
<dbReference type="Gene3D" id="6.10.340.10">
    <property type="match status" value="1"/>
</dbReference>
<dbReference type="Gene3D" id="3.30.70.1230">
    <property type="entry name" value="Nucleotide cyclase"/>
    <property type="match status" value="1"/>
</dbReference>
<dbReference type="InterPro" id="IPR001054">
    <property type="entry name" value="A/G_cyclase"/>
</dbReference>
<dbReference type="InterPro" id="IPR050697">
    <property type="entry name" value="Adenylyl/Guanylyl_Cyclase_3/4"/>
</dbReference>
<dbReference type="InterPro" id="IPR003660">
    <property type="entry name" value="HAMP_dom"/>
</dbReference>
<dbReference type="InterPro" id="IPR029787">
    <property type="entry name" value="Nucleotide_cyclase"/>
</dbReference>
<dbReference type="PANTHER" id="PTHR43081">
    <property type="entry name" value="ADENYLATE CYCLASE, TERMINAL-DIFFERENTIATION SPECIFIC-RELATED"/>
    <property type="match status" value="1"/>
</dbReference>
<dbReference type="PANTHER" id="PTHR43081:SF17">
    <property type="entry name" value="BLL5647 PROTEIN"/>
    <property type="match status" value="1"/>
</dbReference>
<dbReference type="Pfam" id="PF00211">
    <property type="entry name" value="Guanylate_cyc"/>
    <property type="match status" value="1"/>
</dbReference>
<dbReference type="Pfam" id="PF00672">
    <property type="entry name" value="HAMP"/>
    <property type="match status" value="1"/>
</dbReference>
<dbReference type="SMART" id="SM00044">
    <property type="entry name" value="CYCc"/>
    <property type="match status" value="1"/>
</dbReference>
<dbReference type="SMART" id="SM00304">
    <property type="entry name" value="HAMP"/>
    <property type="match status" value="1"/>
</dbReference>
<dbReference type="SUPFAM" id="SSF158472">
    <property type="entry name" value="HAMP domain-like"/>
    <property type="match status" value="1"/>
</dbReference>
<dbReference type="SUPFAM" id="SSF55073">
    <property type="entry name" value="Nucleotide cyclase"/>
    <property type="match status" value="1"/>
</dbReference>
<dbReference type="PROSITE" id="PS50125">
    <property type="entry name" value="GUANYLATE_CYCLASE_2"/>
    <property type="match status" value="1"/>
</dbReference>
<dbReference type="PROSITE" id="PS50885">
    <property type="entry name" value="HAMP"/>
    <property type="match status" value="1"/>
</dbReference>
<feature type="chain" id="PRO_0000426847" description="Uncharacterized protein MT1361">
    <location>
        <begin position="1"/>
        <end position="558"/>
    </location>
</feature>
<feature type="transmembrane region" description="Helical" evidence="1">
    <location>
        <begin position="63"/>
        <end position="83"/>
    </location>
</feature>
<feature type="transmembrane region" description="Helical" evidence="1">
    <location>
        <begin position="90"/>
        <end position="110"/>
    </location>
</feature>
<feature type="transmembrane region" description="Helical" evidence="1">
    <location>
        <begin position="143"/>
        <end position="163"/>
    </location>
</feature>
<feature type="transmembrane region" description="Helical" evidence="1">
    <location>
        <begin position="168"/>
        <end position="188"/>
    </location>
</feature>
<feature type="transmembrane region" description="Helical" evidence="1">
    <location>
        <begin position="226"/>
        <end position="246"/>
    </location>
</feature>
<feature type="transmembrane region" description="Helical" evidence="1">
    <location>
        <begin position="258"/>
        <end position="278"/>
    </location>
</feature>
<feature type="domain" description="HAMP" evidence="3">
    <location>
        <begin position="279"/>
        <end position="330"/>
    </location>
</feature>
<feature type="domain" description="Guanylate cyclase" evidence="2">
    <location>
        <begin position="362"/>
        <end position="486"/>
    </location>
</feature>
<feature type="region of interest" description="Disordered" evidence="4">
    <location>
        <begin position="529"/>
        <end position="558"/>
    </location>
</feature>
<feature type="compositionally biased region" description="Basic and acidic residues" evidence="4">
    <location>
        <begin position="545"/>
        <end position="558"/>
    </location>
</feature>
<proteinExistence type="inferred from homology"/>
<reference key="1">
    <citation type="journal article" date="2002" name="J. Bacteriol.">
        <title>Whole-genome comparison of Mycobacterium tuberculosis clinical and laboratory strains.</title>
        <authorList>
            <person name="Fleischmann R.D."/>
            <person name="Alland D."/>
            <person name="Eisen J.A."/>
            <person name="Carpenter L."/>
            <person name="White O."/>
            <person name="Peterson J.D."/>
            <person name="DeBoy R.T."/>
            <person name="Dodson R.J."/>
            <person name="Gwinn M.L."/>
            <person name="Haft D.H."/>
            <person name="Hickey E.K."/>
            <person name="Kolonay J.F."/>
            <person name="Nelson W.C."/>
            <person name="Umayam L.A."/>
            <person name="Ermolaeva M.D."/>
            <person name="Salzberg S.L."/>
            <person name="Delcher A."/>
            <person name="Utterback T.R."/>
            <person name="Weidman J.F."/>
            <person name="Khouri H.M."/>
            <person name="Gill J."/>
            <person name="Mikula A."/>
            <person name="Bishai W."/>
            <person name="Jacobs W.R. Jr."/>
            <person name="Venter J.C."/>
            <person name="Fraser C.M."/>
        </authorList>
    </citation>
    <scope>NUCLEOTIDE SEQUENCE [LARGE SCALE GENOMIC DNA]</scope>
    <source>
        <strain>CDC 1551 / Oshkosh</strain>
    </source>
</reference>